<sequence length="131" mass="14011">MSWQTYVDDHLMCDIEGQHLTAAAVIGHDGSVWAQSATFPQFKPEEVAAIIKDFDEPGSLAPTGLHLGGTKYMVIQGEPGAVIRGKKGAGGITVKKTGQALIFGIYDEPLTPGQCNIIVERLGDYLLEQGL</sequence>
<organism>
    <name type="scientific">Olea europaea</name>
    <name type="common">Common olive</name>
    <dbReference type="NCBI Taxonomy" id="4146"/>
    <lineage>
        <taxon>Eukaryota</taxon>
        <taxon>Viridiplantae</taxon>
        <taxon>Streptophyta</taxon>
        <taxon>Embryophyta</taxon>
        <taxon>Tracheophyta</taxon>
        <taxon>Spermatophyta</taxon>
        <taxon>Magnoliopsida</taxon>
        <taxon>eudicotyledons</taxon>
        <taxon>Gunneridae</taxon>
        <taxon>Pentapetalae</taxon>
        <taxon>asterids</taxon>
        <taxon>lamiids</taxon>
        <taxon>Lamiales</taxon>
        <taxon>Oleaceae</taxon>
        <taxon>Oleeae</taxon>
        <taxon>Olea</taxon>
    </lineage>
</organism>
<reference key="1">
    <citation type="journal article" date="2012" name="PLoS ONE">
        <title>Characterization of profilin polymorphism in pollen with a focus on multifunctionality.</title>
        <authorList>
            <person name="Jimenez-Lopez J.C."/>
            <person name="Morales S."/>
            <person name="Castro A.J."/>
            <person name="Volkmann D."/>
            <person name="Rodriguez-Garcia M.I."/>
            <person name="Alche Jde D."/>
        </authorList>
    </citation>
    <scope>NUCLEOTIDE SEQUENCE [MRNA]</scope>
    <scope>POLYMORPHISM</scope>
    <source>
        <strain>cv. Lucio</strain>
    </source>
</reference>
<reference key="2">
    <citation type="journal article" date="2013" name="PLoS ONE">
        <title>Analysis of the effects of polymorphism on pollen profilin structural functionality and the generation of conformational, T- and B-cell epitopes.</title>
        <authorList>
            <person name="Jimenez-Lopez J.C."/>
            <person name="Rodriguez-Garcia M.I."/>
            <person name="Alche J.D."/>
        </authorList>
    </citation>
    <scope>3D-STRUCTURE MODELING</scope>
    <scope>DISULFIDE BOND</scope>
</reference>
<comment type="function">
    <text evidence="1">Binds to actin and affects the structure of the cytoskeleton. At high concentrations, profilin prevents the polymerization of actin, whereas it enhances it at low concentrations (By similarity).</text>
</comment>
<comment type="subunit">
    <text evidence="1">Occurs in many kinds of cells as a complex with monomeric actin in a 1:1 ratio.</text>
</comment>
<comment type="subcellular location">
    <subcellularLocation>
        <location evidence="1">Cytoplasm</location>
        <location evidence="1">Cytoskeleton</location>
    </subcellularLocation>
</comment>
<comment type="PTM">
    <text evidence="1">Phosphorylated by MAP kinases.</text>
</comment>
<comment type="polymorphism">
    <text>Several isoforms of the allergen exist due to polymorphism.</text>
</comment>
<comment type="allergen">
    <text>Causes an allergic reaction in human.</text>
</comment>
<comment type="miscellaneous">
    <text evidence="3">The variability of the residues taking part of IgE-binding epitopes might be responsible of the difference in cross-reactivity among olive pollen cultivars, and between distantly related pollen species, leading to a variable range of allergy reactions among atopic patients.</text>
</comment>
<comment type="similarity">
    <text evidence="2">Belongs to the profilin family.</text>
</comment>
<keyword id="KW-0009">Actin-binding</keyword>
<keyword id="KW-0020">Allergen</keyword>
<keyword id="KW-0963">Cytoplasm</keyword>
<keyword id="KW-0206">Cytoskeleton</keyword>
<keyword id="KW-1015">Disulfide bond</keyword>
<keyword id="KW-0597">Phosphoprotein</keyword>
<accession>A4GFC2</accession>
<dbReference type="EMBL" id="DQ640908">
    <property type="protein sequence ID" value="ABG33904.1"/>
    <property type="molecule type" value="mRNA"/>
</dbReference>
<dbReference type="SMR" id="A4GFC2"/>
<dbReference type="Allergome" id="490">
    <property type="allergen name" value="Ole e 2"/>
</dbReference>
<dbReference type="GO" id="GO:0005938">
    <property type="term" value="C:cell cortex"/>
    <property type="evidence" value="ECO:0007669"/>
    <property type="project" value="TreeGrafter"/>
</dbReference>
<dbReference type="GO" id="GO:0005856">
    <property type="term" value="C:cytoskeleton"/>
    <property type="evidence" value="ECO:0007669"/>
    <property type="project" value="UniProtKB-SubCell"/>
</dbReference>
<dbReference type="GO" id="GO:0003785">
    <property type="term" value="F:actin monomer binding"/>
    <property type="evidence" value="ECO:0007669"/>
    <property type="project" value="TreeGrafter"/>
</dbReference>
<dbReference type="CDD" id="cd00148">
    <property type="entry name" value="PROF"/>
    <property type="match status" value="1"/>
</dbReference>
<dbReference type="FunFam" id="3.30.450.30:FF:000001">
    <property type="entry name" value="Profilin"/>
    <property type="match status" value="1"/>
</dbReference>
<dbReference type="Gene3D" id="3.30.450.30">
    <property type="entry name" value="Dynein light chain 2a, cytoplasmic"/>
    <property type="match status" value="1"/>
</dbReference>
<dbReference type="InterPro" id="IPR048278">
    <property type="entry name" value="PFN"/>
</dbReference>
<dbReference type="InterPro" id="IPR005455">
    <property type="entry name" value="PFN_euk"/>
</dbReference>
<dbReference type="InterPro" id="IPR036140">
    <property type="entry name" value="PFN_sf"/>
</dbReference>
<dbReference type="InterPro" id="IPR027310">
    <property type="entry name" value="Profilin_CS"/>
</dbReference>
<dbReference type="PANTHER" id="PTHR11604">
    <property type="entry name" value="PROFILIN"/>
    <property type="match status" value="1"/>
</dbReference>
<dbReference type="PANTHER" id="PTHR11604:SF35">
    <property type="entry name" value="PROFILIN-3"/>
    <property type="match status" value="1"/>
</dbReference>
<dbReference type="Pfam" id="PF00235">
    <property type="entry name" value="Profilin"/>
    <property type="match status" value="1"/>
</dbReference>
<dbReference type="PRINTS" id="PR00392">
    <property type="entry name" value="PROFILIN"/>
</dbReference>
<dbReference type="PRINTS" id="PR01640">
    <property type="entry name" value="PROFILINPLNT"/>
</dbReference>
<dbReference type="SMART" id="SM00392">
    <property type="entry name" value="PROF"/>
    <property type="match status" value="1"/>
</dbReference>
<dbReference type="SUPFAM" id="SSF55770">
    <property type="entry name" value="Profilin (actin-binding protein)"/>
    <property type="match status" value="1"/>
</dbReference>
<dbReference type="PROSITE" id="PS00414">
    <property type="entry name" value="PROFILIN"/>
    <property type="match status" value="1"/>
</dbReference>
<feature type="initiator methionine" description="Removed" evidence="1">
    <location>
        <position position="1"/>
    </location>
</feature>
<feature type="chain" id="PRO_0000425049" description="Profilin-4">
    <location>
        <begin position="2"/>
        <end position="131"/>
    </location>
</feature>
<feature type="short sequence motif" description="Involved in PIP2 interaction">
    <location>
        <begin position="81"/>
        <end position="97"/>
    </location>
</feature>
<feature type="modified residue" description="Phosphothreonine" evidence="1">
    <location>
        <position position="111"/>
    </location>
</feature>
<feature type="disulfide bond" evidence="3">
    <location>
        <begin position="13"/>
        <end position="115"/>
    </location>
</feature>
<name>PROCF_OLEEU</name>
<protein>
    <recommendedName>
        <fullName>Profilin-4</fullName>
    </recommendedName>
    <alternativeName>
        <fullName>Pollen allergen Ole e 2</fullName>
    </alternativeName>
    <allergenName>Ole e 2</allergenName>
</protein>
<proteinExistence type="evidence at protein level"/>
<evidence type="ECO:0000250" key="1"/>
<evidence type="ECO:0000305" key="2"/>
<evidence type="ECO:0000305" key="3">
    <source>
    </source>
</evidence>